<evidence type="ECO:0000255" key="1">
    <source>
        <dbReference type="HAMAP-Rule" id="MF_01593"/>
    </source>
</evidence>
<feature type="chain" id="PRO_0000316331" description="Mlc titration factor A">
    <location>
        <begin position="1"/>
        <end position="270"/>
    </location>
</feature>
<feature type="binding site" evidence="1">
    <location>
        <position position="111"/>
    </location>
    <ligand>
        <name>Zn(2+)</name>
        <dbReference type="ChEBI" id="CHEBI:29105"/>
    </ligand>
</feature>
<feature type="binding site" evidence="1">
    <location>
        <position position="148"/>
    </location>
    <ligand>
        <name>Zn(2+)</name>
        <dbReference type="ChEBI" id="CHEBI:29105"/>
    </ligand>
</feature>
<feature type="binding site" evidence="1">
    <location>
        <position position="152"/>
    </location>
    <ligand>
        <name>Zn(2+)</name>
        <dbReference type="ChEBI" id="CHEBI:29105"/>
    </ligand>
</feature>
<feature type="binding site" evidence="1">
    <location>
        <position position="211"/>
    </location>
    <ligand>
        <name>Zn(2+)</name>
        <dbReference type="ChEBI" id="CHEBI:29105"/>
    </ligand>
</feature>
<organism>
    <name type="scientific">Yersinia pestis bv. Antiqua (strain Nepal516)</name>
    <dbReference type="NCBI Taxonomy" id="377628"/>
    <lineage>
        <taxon>Bacteria</taxon>
        <taxon>Pseudomonadati</taxon>
        <taxon>Pseudomonadota</taxon>
        <taxon>Gammaproteobacteria</taxon>
        <taxon>Enterobacterales</taxon>
        <taxon>Yersiniaceae</taxon>
        <taxon>Yersinia</taxon>
    </lineage>
</organism>
<accession>Q1CH12</accession>
<accession>C4GUU4</accession>
<proteinExistence type="inferred from homology"/>
<name>MTFA_YERPN</name>
<reference key="1">
    <citation type="journal article" date="2006" name="J. Bacteriol.">
        <title>Complete genome sequence of Yersinia pestis strains Antiqua and Nepal516: evidence of gene reduction in an emerging pathogen.</title>
        <authorList>
            <person name="Chain P.S.G."/>
            <person name="Hu P."/>
            <person name="Malfatti S.A."/>
            <person name="Radnedge L."/>
            <person name="Larimer F."/>
            <person name="Vergez L.M."/>
            <person name="Worsham P."/>
            <person name="Chu M.C."/>
            <person name="Andersen G.L."/>
        </authorList>
    </citation>
    <scope>NUCLEOTIDE SEQUENCE [LARGE SCALE GENOMIC DNA]</scope>
    <source>
        <strain>Nepal516</strain>
    </source>
</reference>
<reference key="2">
    <citation type="submission" date="2009-04" db="EMBL/GenBank/DDBJ databases">
        <title>Yersinia pestis Nepal516A whole genome shotgun sequencing project.</title>
        <authorList>
            <person name="Plunkett G. III"/>
            <person name="Anderson B.D."/>
            <person name="Baumler D.J."/>
            <person name="Burland V."/>
            <person name="Cabot E.L."/>
            <person name="Glasner J.D."/>
            <person name="Mau B."/>
            <person name="Neeno-Eckwall E."/>
            <person name="Perna N.T."/>
            <person name="Munk A.C."/>
            <person name="Tapia R."/>
            <person name="Green L.D."/>
            <person name="Rogers Y.C."/>
            <person name="Detter J.C."/>
            <person name="Bruce D.C."/>
            <person name="Brettin T.S."/>
        </authorList>
    </citation>
    <scope>NUCLEOTIDE SEQUENCE [LARGE SCALE GENOMIC DNA]</scope>
    <source>
        <strain>Nepal516</strain>
    </source>
</reference>
<sequence length="270" mass="30659">MIKWLWKANKPQAEMLAQWHEALNIPLLAPLNEPEQQRLVSVASQLLQQKRFIPLQGLILTPLMQARLALLFALPVMELGAKWLDGFHEVLIYPSPFIVAEDWQDDLGLVHSGQSVQSGQSWEQGPIVLNWQDIQDSFDLSGFNLVIHEAAHKLDMRNGGHSNGVPPIAMRDVAVWEHDLHHAMDNIQDEIDMVGVEGASMDAYAASNPAECFAVLSEYFFSAPELLEGRFPAVYQHFCRFYRQDPLARLKRWENSLADNPPPENTHSHR</sequence>
<comment type="function">
    <text evidence="1">Involved in the modulation of the activity of the glucose-phosphotransferase system (glucose-PTS). Interacts with the transcriptional repressor Mlc, preventing its interaction with DNA and leading to the modulation of expression of genes regulated by Mlc, including ptsG, which encodes the PTS system glucose-specific EIICB component.</text>
</comment>
<comment type="function">
    <text evidence="1">Shows zinc-dependent metallopeptidase activity.</text>
</comment>
<comment type="cofactor">
    <cofactor evidence="1">
        <name>Zn(2+)</name>
        <dbReference type="ChEBI" id="CHEBI:29105"/>
    </cofactor>
    <text evidence="1">Binds 1 zinc ion per subunit.</text>
</comment>
<comment type="subunit">
    <text evidence="1">Interacts with Mlc.</text>
</comment>
<comment type="subcellular location">
    <subcellularLocation>
        <location evidence="1">Cytoplasm</location>
    </subcellularLocation>
</comment>
<comment type="similarity">
    <text evidence="1">Belongs to the MtfA family.</text>
</comment>
<gene>
    <name evidence="1" type="primary">mtfA</name>
    <name type="ordered locus">YPN_2390</name>
    <name type="ORF">YP516_2689</name>
</gene>
<dbReference type="EC" id="3.4.11.-" evidence="1"/>
<dbReference type="EMBL" id="CP000305">
    <property type="protein sequence ID" value="ABG18718.1"/>
    <property type="molecule type" value="Genomic_DNA"/>
</dbReference>
<dbReference type="EMBL" id="ACNQ01000013">
    <property type="protein sequence ID" value="EEO76481.1"/>
    <property type="molecule type" value="Genomic_DNA"/>
</dbReference>
<dbReference type="RefSeq" id="WP_002211042.1">
    <property type="nucleotide sequence ID" value="NZ_ACNQ01000013.1"/>
</dbReference>
<dbReference type="SMR" id="Q1CH12"/>
<dbReference type="GeneID" id="57976845"/>
<dbReference type="KEGG" id="ypn:YPN_2390"/>
<dbReference type="HOGENOM" id="CLU_063037_2_0_6"/>
<dbReference type="Proteomes" id="UP000008936">
    <property type="component" value="Chromosome"/>
</dbReference>
<dbReference type="GO" id="GO:0005829">
    <property type="term" value="C:cytosol"/>
    <property type="evidence" value="ECO:0007669"/>
    <property type="project" value="TreeGrafter"/>
</dbReference>
<dbReference type="GO" id="GO:0004177">
    <property type="term" value="F:aminopeptidase activity"/>
    <property type="evidence" value="ECO:0007669"/>
    <property type="project" value="UniProtKB-UniRule"/>
</dbReference>
<dbReference type="GO" id="GO:0008237">
    <property type="term" value="F:metallopeptidase activity"/>
    <property type="evidence" value="ECO:0007669"/>
    <property type="project" value="UniProtKB-UniRule"/>
</dbReference>
<dbReference type="GO" id="GO:0008270">
    <property type="term" value="F:zinc ion binding"/>
    <property type="evidence" value="ECO:0007669"/>
    <property type="project" value="UniProtKB-UniRule"/>
</dbReference>
<dbReference type="GO" id="GO:0006508">
    <property type="term" value="P:proteolysis"/>
    <property type="evidence" value="ECO:0007669"/>
    <property type="project" value="UniProtKB-KW"/>
</dbReference>
<dbReference type="CDD" id="cd20169">
    <property type="entry name" value="Peptidase_M90_mtfA"/>
    <property type="match status" value="1"/>
</dbReference>
<dbReference type="FunFam" id="1.10.472.150:FF:000001">
    <property type="entry name" value="Protein MtfA"/>
    <property type="match status" value="1"/>
</dbReference>
<dbReference type="FunFam" id="3.40.390.10:FF:000012">
    <property type="entry name" value="Protein MtfA"/>
    <property type="match status" value="1"/>
</dbReference>
<dbReference type="Gene3D" id="3.40.390.10">
    <property type="entry name" value="Collagenase (Catalytic Domain)"/>
    <property type="match status" value="1"/>
</dbReference>
<dbReference type="Gene3D" id="1.10.472.150">
    <property type="entry name" value="Glucose-regulated metallo-peptidase M90, N-terminal domain"/>
    <property type="match status" value="1"/>
</dbReference>
<dbReference type="HAMAP" id="MF_01593">
    <property type="entry name" value="MtfA"/>
    <property type="match status" value="1"/>
</dbReference>
<dbReference type="InterPro" id="IPR024079">
    <property type="entry name" value="MetalloPept_cat_dom_sf"/>
</dbReference>
<dbReference type="InterPro" id="IPR057256">
    <property type="entry name" value="MtfA_enterob"/>
</dbReference>
<dbReference type="InterPro" id="IPR010384">
    <property type="entry name" value="MtfA_fam"/>
</dbReference>
<dbReference type="InterPro" id="IPR042252">
    <property type="entry name" value="MtfA_N"/>
</dbReference>
<dbReference type="NCBIfam" id="NF011939">
    <property type="entry name" value="PRK15410.1"/>
    <property type="match status" value="1"/>
</dbReference>
<dbReference type="PANTHER" id="PTHR30164">
    <property type="entry name" value="MTFA PEPTIDASE"/>
    <property type="match status" value="1"/>
</dbReference>
<dbReference type="PANTHER" id="PTHR30164:SF2">
    <property type="entry name" value="PROTEIN MTFA"/>
    <property type="match status" value="1"/>
</dbReference>
<dbReference type="Pfam" id="PF06167">
    <property type="entry name" value="Peptidase_M90"/>
    <property type="match status" value="1"/>
</dbReference>
<dbReference type="SUPFAM" id="SSF55486">
    <property type="entry name" value="Metalloproteases ('zincins'), catalytic domain"/>
    <property type="match status" value="1"/>
</dbReference>
<keyword id="KW-0031">Aminopeptidase</keyword>
<keyword id="KW-0963">Cytoplasm</keyword>
<keyword id="KW-0378">Hydrolase</keyword>
<keyword id="KW-0479">Metal-binding</keyword>
<keyword id="KW-0482">Metalloprotease</keyword>
<keyword id="KW-0645">Protease</keyword>
<keyword id="KW-0862">Zinc</keyword>
<protein>
    <recommendedName>
        <fullName evidence="1">Mlc titration factor A</fullName>
    </recommendedName>
    <alternativeName>
        <fullName evidence="1">Probable zinc metallopeptidase MtfA</fullName>
        <ecNumber evidence="1">3.4.11.-</ecNumber>
    </alternativeName>
</protein>